<comment type="function">
    <text evidence="1">Catalyzes the hydrolysis of fructose 1,6-bisphosphate (Fru 1,6-P2) and sedoheptulose 1,7-bisphosphate (Sed 1,7-P2) to fructose 6-phosphate and sedoheptulose 7-phosphate, respectively.</text>
</comment>
<comment type="catalytic activity">
    <reaction>
        <text>beta-D-fructose 1,6-bisphosphate + H2O = beta-D-fructose 6-phosphate + phosphate</text>
        <dbReference type="Rhea" id="RHEA:11064"/>
        <dbReference type="ChEBI" id="CHEBI:15377"/>
        <dbReference type="ChEBI" id="CHEBI:32966"/>
        <dbReference type="ChEBI" id="CHEBI:43474"/>
        <dbReference type="ChEBI" id="CHEBI:57634"/>
        <dbReference type="EC" id="3.1.3.11"/>
    </reaction>
</comment>
<comment type="catalytic activity">
    <reaction>
        <text>D-sedoheptulose 1,7-bisphosphate + H2O = D-sedoheptulose 7-phosphate + phosphate</text>
        <dbReference type="Rhea" id="RHEA:17461"/>
        <dbReference type="ChEBI" id="CHEBI:15377"/>
        <dbReference type="ChEBI" id="CHEBI:43474"/>
        <dbReference type="ChEBI" id="CHEBI:57483"/>
        <dbReference type="ChEBI" id="CHEBI:58335"/>
        <dbReference type="EC" id="3.1.3.37"/>
    </reaction>
</comment>
<comment type="cofactor">
    <cofactor evidence="1">
        <name>Mn(2+)</name>
        <dbReference type="ChEBI" id="CHEBI:29035"/>
    </cofactor>
</comment>
<comment type="pathway">
    <text>Carbohydrate biosynthesis; Calvin cycle.</text>
</comment>
<comment type="subunit">
    <text evidence="1">Homotetramer.</text>
</comment>
<comment type="similarity">
    <text evidence="2">Belongs to the FBPase class 2 family.</text>
</comment>
<sequence>MNQTLIQEILEVVEQAAIASAKLTGLGQKDEADAAAVEAMRLRMGKIEMKGKIVIGEGERDEAPMLYIGEEVGSGNGPGVDFAVDPCEGTNLCANNQRGSMAVLAASDTGGLFNAPDFYMNKLAAPPAAKGKVDIRNSATENLKILSDCLGLSIDELTVVVMDRTRHKDLIKEIRGCGAKVQPISDGDVQAAIACGFAGTGTHCLMGIGAAPEGVISAAAMRALGGHFQGQLVYDPAIAQTSEWADYTKEGNIKRLNEMGITDIDKIYEANELASGENVVFAGSGITDGLLFDGVKFERDCVRTSSLVISTLDSTARFTNTVHIKDGAKSISL</sequence>
<gene>
    <name type="ordered locus">P9301_08271</name>
</gene>
<evidence type="ECO:0000250" key="1"/>
<evidence type="ECO:0000305" key="2"/>
<reference key="1">
    <citation type="journal article" date="2007" name="PLoS Genet.">
        <title>Patterns and implications of gene gain and loss in the evolution of Prochlorococcus.</title>
        <authorList>
            <person name="Kettler G.C."/>
            <person name="Martiny A.C."/>
            <person name="Huang K."/>
            <person name="Zucker J."/>
            <person name="Coleman M.L."/>
            <person name="Rodrigue S."/>
            <person name="Chen F."/>
            <person name="Lapidus A."/>
            <person name="Ferriera S."/>
            <person name="Johnson J."/>
            <person name="Steglich C."/>
            <person name="Church G.M."/>
            <person name="Richardson P."/>
            <person name="Chisholm S.W."/>
        </authorList>
    </citation>
    <scope>NUCLEOTIDE SEQUENCE [LARGE SCALE GENOMIC DNA]</scope>
    <source>
        <strain>MIT 9301</strain>
    </source>
</reference>
<keyword id="KW-0113">Calvin cycle</keyword>
<keyword id="KW-0119">Carbohydrate metabolism</keyword>
<keyword id="KW-0378">Hydrolase</keyword>
<keyword id="KW-0464">Manganese</keyword>
<keyword id="KW-0479">Metal-binding</keyword>
<keyword id="KW-1185">Reference proteome</keyword>
<proteinExistence type="inferred from homology"/>
<protein>
    <recommendedName>
        <fullName>D-fructose 1,6-bisphosphatase class 2/sedoheptulose 1,7-bisphosphatase</fullName>
        <shortName>FBPase class 2/SBPase</shortName>
        <ecNumber>3.1.3.11</ecNumber>
        <ecNumber>3.1.3.37</ecNumber>
    </recommendedName>
</protein>
<name>FBSB_PROM0</name>
<organism>
    <name type="scientific">Prochlorococcus marinus (strain MIT 9301)</name>
    <dbReference type="NCBI Taxonomy" id="167546"/>
    <lineage>
        <taxon>Bacteria</taxon>
        <taxon>Bacillati</taxon>
        <taxon>Cyanobacteriota</taxon>
        <taxon>Cyanophyceae</taxon>
        <taxon>Synechococcales</taxon>
        <taxon>Prochlorococcaceae</taxon>
        <taxon>Prochlorococcus</taxon>
    </lineage>
</organism>
<dbReference type="EC" id="3.1.3.11"/>
<dbReference type="EC" id="3.1.3.37"/>
<dbReference type="EMBL" id="CP000576">
    <property type="protein sequence ID" value="ABO17450.1"/>
    <property type="molecule type" value="Genomic_DNA"/>
</dbReference>
<dbReference type="SMR" id="A3PCH5"/>
<dbReference type="STRING" id="167546.P9301_08271"/>
<dbReference type="KEGG" id="pmg:P9301_08271"/>
<dbReference type="eggNOG" id="COG1494">
    <property type="taxonomic scope" value="Bacteria"/>
</dbReference>
<dbReference type="HOGENOM" id="CLU_054938_0_0_3"/>
<dbReference type="OrthoDB" id="9779353at2"/>
<dbReference type="UniPathway" id="UPA00116"/>
<dbReference type="Proteomes" id="UP000001430">
    <property type="component" value="Chromosome"/>
</dbReference>
<dbReference type="GO" id="GO:0005829">
    <property type="term" value="C:cytosol"/>
    <property type="evidence" value="ECO:0007669"/>
    <property type="project" value="TreeGrafter"/>
</dbReference>
<dbReference type="GO" id="GO:0042132">
    <property type="term" value="F:fructose 1,6-bisphosphate 1-phosphatase activity"/>
    <property type="evidence" value="ECO:0007669"/>
    <property type="project" value="UniProtKB-EC"/>
</dbReference>
<dbReference type="GO" id="GO:0046872">
    <property type="term" value="F:metal ion binding"/>
    <property type="evidence" value="ECO:0007669"/>
    <property type="project" value="UniProtKB-KW"/>
</dbReference>
<dbReference type="GO" id="GO:0050278">
    <property type="term" value="F:sedoheptulose-bisphosphatase activity"/>
    <property type="evidence" value="ECO:0007669"/>
    <property type="project" value="UniProtKB-EC"/>
</dbReference>
<dbReference type="GO" id="GO:0030388">
    <property type="term" value="P:fructose 1,6-bisphosphate metabolic process"/>
    <property type="evidence" value="ECO:0007669"/>
    <property type="project" value="TreeGrafter"/>
</dbReference>
<dbReference type="GO" id="GO:0006094">
    <property type="term" value="P:gluconeogenesis"/>
    <property type="evidence" value="ECO:0007669"/>
    <property type="project" value="InterPro"/>
</dbReference>
<dbReference type="GO" id="GO:0006071">
    <property type="term" value="P:glycerol metabolic process"/>
    <property type="evidence" value="ECO:0007669"/>
    <property type="project" value="InterPro"/>
</dbReference>
<dbReference type="GO" id="GO:0019253">
    <property type="term" value="P:reductive pentose-phosphate cycle"/>
    <property type="evidence" value="ECO:0007669"/>
    <property type="project" value="UniProtKB-UniPathway"/>
</dbReference>
<dbReference type="CDD" id="cd01516">
    <property type="entry name" value="FBPase_glpX"/>
    <property type="match status" value="1"/>
</dbReference>
<dbReference type="FunFam" id="3.40.190.90:FF:000001">
    <property type="entry name" value="Fructose-1,6-bisphosphatase"/>
    <property type="match status" value="1"/>
</dbReference>
<dbReference type="Gene3D" id="3.40.190.90">
    <property type="match status" value="1"/>
</dbReference>
<dbReference type="Gene3D" id="3.30.540.10">
    <property type="entry name" value="Fructose-1,6-Bisphosphatase, subunit A, domain 1"/>
    <property type="match status" value="1"/>
</dbReference>
<dbReference type="InterPro" id="IPR004464">
    <property type="entry name" value="FBPase_class-2/SBPase"/>
</dbReference>
<dbReference type="NCBIfam" id="TIGR00330">
    <property type="entry name" value="glpX"/>
    <property type="match status" value="1"/>
</dbReference>
<dbReference type="PANTHER" id="PTHR30447:SF0">
    <property type="entry name" value="FRUCTOSE-1,6-BISPHOSPHATASE 1 CLASS 2-RELATED"/>
    <property type="match status" value="1"/>
</dbReference>
<dbReference type="PANTHER" id="PTHR30447">
    <property type="entry name" value="FRUCTOSE-1,6-BISPHOSPHATASE CLASS 2"/>
    <property type="match status" value="1"/>
</dbReference>
<dbReference type="Pfam" id="PF03320">
    <property type="entry name" value="FBPase_glpX"/>
    <property type="match status" value="1"/>
</dbReference>
<dbReference type="PIRSF" id="PIRSF004532">
    <property type="entry name" value="GlpX"/>
    <property type="match status" value="1"/>
</dbReference>
<dbReference type="SUPFAM" id="SSF56655">
    <property type="entry name" value="Carbohydrate phosphatase"/>
    <property type="match status" value="1"/>
</dbReference>
<accession>A3PCH5</accession>
<feature type="chain" id="PRO_0000342716" description="D-fructose 1,6-bisphosphatase class 2/sedoheptulose 1,7-bisphosphatase">
    <location>
        <begin position="1"/>
        <end position="333"/>
    </location>
</feature>
<feature type="binding site" evidence="1">
    <location>
        <position position="33"/>
    </location>
    <ligand>
        <name>Mn(2+)</name>
        <dbReference type="ChEBI" id="CHEBI:29035"/>
        <label>1</label>
    </ligand>
</feature>
<feature type="binding site" evidence="1">
    <location>
        <position position="57"/>
    </location>
    <ligand>
        <name>Mn(2+)</name>
        <dbReference type="ChEBI" id="CHEBI:29035"/>
        <label>1</label>
    </ligand>
</feature>
<feature type="binding site" evidence="1">
    <location>
        <position position="85"/>
    </location>
    <ligand>
        <name>Mn(2+)</name>
        <dbReference type="ChEBI" id="CHEBI:29035"/>
        <label>2</label>
    </ligand>
</feature>
<feature type="binding site" evidence="1">
    <location>
        <begin position="88"/>
        <end position="90"/>
    </location>
    <ligand>
        <name>substrate</name>
    </ligand>
</feature>
<feature type="binding site" evidence="1">
    <location>
        <position position="88"/>
    </location>
    <ligand>
        <name>Mn(2+)</name>
        <dbReference type="ChEBI" id="CHEBI:29035"/>
        <label>2</label>
    </ligand>
</feature>
<feature type="binding site" evidence="1">
    <location>
        <position position="119"/>
    </location>
    <ligand>
        <name>substrate</name>
    </ligand>
</feature>
<feature type="binding site" evidence="1">
    <location>
        <begin position="164"/>
        <end position="166"/>
    </location>
    <ligand>
        <name>substrate</name>
    </ligand>
</feature>
<feature type="binding site" evidence="1">
    <location>
        <begin position="186"/>
        <end position="188"/>
    </location>
    <ligand>
        <name>substrate</name>
    </ligand>
</feature>
<feature type="binding site" evidence="1">
    <location>
        <position position="213"/>
    </location>
    <ligand>
        <name>Mn(2+)</name>
        <dbReference type="ChEBI" id="CHEBI:29035"/>
        <label>2</label>
    </ligand>
</feature>